<organism>
    <name type="scientific">Argemone mexicana</name>
    <name type="common">Mexican prickly poppy</name>
    <dbReference type="NCBI Taxonomy" id="54796"/>
    <lineage>
        <taxon>Eukaryota</taxon>
        <taxon>Viridiplantae</taxon>
        <taxon>Streptophyta</taxon>
        <taxon>Embryophyta</taxon>
        <taxon>Tracheophyta</taxon>
        <taxon>Spermatophyta</taxon>
        <taxon>Magnoliopsida</taxon>
        <taxon>Ranunculales</taxon>
        <taxon>Papaveraceae</taxon>
        <taxon>Papaveroideae</taxon>
        <taxon>Argemone</taxon>
    </lineage>
</organism>
<protein>
    <recommendedName>
        <fullName evidence="5">Trifunctional (S)-stylopine synthase/(S)-nandinine synthase/(S)-canadine synthase</fullName>
        <shortName evidence="5">STS</shortName>
        <ecNumber evidence="3">1.14.19.64</ecNumber>
        <ecNumber evidence="3">1.14.19.68</ecNumber>
        <ecNumber evidence="3">1.14.19.73</ecNumber>
    </recommendedName>
    <alternativeName>
        <fullName evidence="4">Cytochrome P450 719A13</fullName>
    </alternativeName>
</protein>
<name>C719D_ARGME</name>
<gene>
    <name evidence="4" type="primary">CYP719A13</name>
</gene>
<dbReference type="EC" id="1.14.19.64" evidence="3"/>
<dbReference type="EC" id="1.14.19.68" evidence="3"/>
<dbReference type="EC" id="1.14.19.73" evidence="3"/>
<dbReference type="EMBL" id="EF451151">
    <property type="protein sequence ID" value="ABR14721.1"/>
    <property type="molecule type" value="mRNA"/>
</dbReference>
<dbReference type="SMR" id="B1NF19"/>
<dbReference type="KEGG" id="ag:ABR14721"/>
<dbReference type="BioCyc" id="MetaCyc:MONOMER-18680"/>
<dbReference type="BRENDA" id="1.14.19.64">
    <property type="organism ID" value="9127"/>
</dbReference>
<dbReference type="BRENDA" id="1.14.19.65">
    <property type="organism ID" value="9127"/>
</dbReference>
<dbReference type="BRENDA" id="1.14.19.68">
    <property type="organism ID" value="9127"/>
</dbReference>
<dbReference type="GO" id="GO:0005789">
    <property type="term" value="C:endoplasmic reticulum membrane"/>
    <property type="evidence" value="ECO:0007669"/>
    <property type="project" value="UniProtKB-SubCell"/>
</dbReference>
<dbReference type="GO" id="GO:0047056">
    <property type="term" value="F:(S)-canadine synthase activity"/>
    <property type="evidence" value="ECO:0000314"/>
    <property type="project" value="UniProtKB"/>
</dbReference>
<dbReference type="GO" id="GO:0102632">
    <property type="term" value="F:(S)-nandinine synthase activity"/>
    <property type="evidence" value="ECO:0000314"/>
    <property type="project" value="UniProtKB"/>
</dbReference>
<dbReference type="GO" id="GO:0047052">
    <property type="term" value="F:(S)-stylopine synthase activity"/>
    <property type="evidence" value="ECO:0000314"/>
    <property type="project" value="UniProtKB"/>
</dbReference>
<dbReference type="GO" id="GO:0020037">
    <property type="term" value="F:heme binding"/>
    <property type="evidence" value="ECO:0007669"/>
    <property type="project" value="InterPro"/>
</dbReference>
<dbReference type="GO" id="GO:0005506">
    <property type="term" value="F:iron ion binding"/>
    <property type="evidence" value="ECO:0007669"/>
    <property type="project" value="InterPro"/>
</dbReference>
<dbReference type="GO" id="GO:0004497">
    <property type="term" value="F:monooxygenase activity"/>
    <property type="evidence" value="ECO:0007669"/>
    <property type="project" value="UniProtKB-KW"/>
</dbReference>
<dbReference type="GO" id="GO:0033075">
    <property type="term" value="P:isoquinoline alkaloid biosynthetic process"/>
    <property type="evidence" value="ECO:0000314"/>
    <property type="project" value="UniProtKB"/>
</dbReference>
<dbReference type="FunFam" id="1.10.630.10:FF:000147">
    <property type="entry name" value="(S)-stylopine synthase 1"/>
    <property type="match status" value="1"/>
</dbReference>
<dbReference type="Gene3D" id="1.10.630.10">
    <property type="entry name" value="Cytochrome P450"/>
    <property type="match status" value="1"/>
</dbReference>
<dbReference type="InterPro" id="IPR001128">
    <property type="entry name" value="Cyt_P450"/>
</dbReference>
<dbReference type="InterPro" id="IPR017972">
    <property type="entry name" value="Cyt_P450_CS"/>
</dbReference>
<dbReference type="InterPro" id="IPR002401">
    <property type="entry name" value="Cyt_P450_E_grp-I"/>
</dbReference>
<dbReference type="InterPro" id="IPR036396">
    <property type="entry name" value="Cyt_P450_sf"/>
</dbReference>
<dbReference type="PANTHER" id="PTHR47944">
    <property type="entry name" value="CYTOCHROME P450 98A9"/>
    <property type="match status" value="1"/>
</dbReference>
<dbReference type="PANTHER" id="PTHR47944:SF4">
    <property type="entry name" value="OS09G0441700 PROTEIN"/>
    <property type="match status" value="1"/>
</dbReference>
<dbReference type="Pfam" id="PF00067">
    <property type="entry name" value="p450"/>
    <property type="match status" value="1"/>
</dbReference>
<dbReference type="PRINTS" id="PR00463">
    <property type="entry name" value="EP450I"/>
</dbReference>
<dbReference type="PRINTS" id="PR00385">
    <property type="entry name" value="P450"/>
</dbReference>
<dbReference type="SUPFAM" id="SSF48264">
    <property type="entry name" value="Cytochrome P450"/>
    <property type="match status" value="1"/>
</dbReference>
<dbReference type="PROSITE" id="PS00086">
    <property type="entry name" value="CYTOCHROME_P450"/>
    <property type="match status" value="1"/>
</dbReference>
<accession>B1NF19</accession>
<feature type="chain" id="PRO_0000418925" description="Trifunctional (S)-stylopine synthase/(S)-nandinine synthase/(S)-canadine synthase">
    <location>
        <begin position="1"/>
        <end position="504"/>
    </location>
</feature>
<feature type="transmembrane region" description="Helical" evidence="2">
    <location>
        <begin position="16"/>
        <end position="36"/>
    </location>
</feature>
<feature type="binding site" description="axial binding residue" evidence="1">
    <location>
        <position position="448"/>
    </location>
    <ligand>
        <name>heme</name>
        <dbReference type="ChEBI" id="CHEBI:30413"/>
    </ligand>
    <ligandPart>
        <name>Fe</name>
        <dbReference type="ChEBI" id="CHEBI:18248"/>
    </ligandPart>
</feature>
<proteinExistence type="evidence at protein level"/>
<reference key="1">
    <citation type="journal article" date="2011" name="Arch. Biochem. Biophys.">
        <title>Characterization of two methylenedioxy bridge-forming cytochrome P450-dependent enzymes of alkaloid formation in the Mexican prickly poppy Argemone mexicana.</title>
        <authorList>
            <person name="Diaz Chavez M.L."/>
            <person name="Rolf M."/>
            <person name="Gesell A."/>
            <person name="Kutchan T.M."/>
        </authorList>
    </citation>
    <scope>NUCLEOTIDE SEQUENCE [MRNA]</scope>
    <scope>FUNCTION</scope>
    <scope>CATALYTIC ACTIVITY</scope>
    <scope>BIOPHYSICOCHEMICAL PROPERTIES</scope>
    <scope>TISSUE SPECIFICITY</scope>
</reference>
<keyword id="KW-0256">Endoplasmic reticulum</keyword>
<keyword id="KW-0349">Heme</keyword>
<keyword id="KW-0408">Iron</keyword>
<keyword id="KW-0472">Membrane</keyword>
<keyword id="KW-0479">Metal-binding</keyword>
<keyword id="KW-0503">Monooxygenase</keyword>
<keyword id="KW-0560">Oxidoreductase</keyword>
<keyword id="KW-0812">Transmembrane</keyword>
<keyword id="KW-1133">Transmembrane helix</keyword>
<comment type="function">
    <text evidence="3">Methylenedioxy bridge-forming cytochrome P450 involved in the biosynthesis of isoquinoline alkaloids. Converts (S)-cheilanthifoline to (S)-stylopine, (S)-scoulerine to (S)-nandinine and (S)-tetrahydrocolumbamine to (S)-canadine. Can be involved in both sanguinarine and berberine biosynthesis. Catalyzes an oxidative reaction that does not incorporate oxygen into the product.</text>
</comment>
<comment type="catalytic activity">
    <reaction evidence="3">
        <text>(S)-cheilanthifoline + reduced [NADPH--hemoprotein reductase] + O2 = (S)-stylopine + oxidized [NADPH--hemoprotein reductase] + 2 H2O + H(+)</text>
        <dbReference type="Rhea" id="RHEA:13773"/>
        <dbReference type="Rhea" id="RHEA-COMP:11964"/>
        <dbReference type="Rhea" id="RHEA-COMP:11965"/>
        <dbReference type="ChEBI" id="CHEBI:15377"/>
        <dbReference type="ChEBI" id="CHEBI:15378"/>
        <dbReference type="ChEBI" id="CHEBI:15379"/>
        <dbReference type="ChEBI" id="CHEBI:16233"/>
        <dbReference type="ChEBI" id="CHEBI:18285"/>
        <dbReference type="ChEBI" id="CHEBI:57618"/>
        <dbReference type="ChEBI" id="CHEBI:58210"/>
        <dbReference type="EC" id="1.14.19.64"/>
    </reaction>
</comment>
<comment type="catalytic activity">
    <reaction evidence="3">
        <text>(S)-tetrahydrocolumbamine + reduced [NADPH--hemoprotein reductase] + O2 = (S)-canadine + oxidized [NADPH--hemoprotein reductase] + 2 H2O + H(+)</text>
        <dbReference type="Rhea" id="RHEA:21456"/>
        <dbReference type="Rhea" id="RHEA-COMP:11964"/>
        <dbReference type="Rhea" id="RHEA-COMP:11965"/>
        <dbReference type="ChEBI" id="CHEBI:15377"/>
        <dbReference type="ChEBI" id="CHEBI:15378"/>
        <dbReference type="ChEBI" id="CHEBI:15379"/>
        <dbReference type="ChEBI" id="CHEBI:16592"/>
        <dbReference type="ChEBI" id="CHEBI:17772"/>
        <dbReference type="ChEBI" id="CHEBI:57618"/>
        <dbReference type="ChEBI" id="CHEBI:58210"/>
        <dbReference type="EC" id="1.14.19.68"/>
    </reaction>
</comment>
<comment type="catalytic activity">
    <reaction evidence="3">
        <text>(S)-scoulerine + reduced [NADPH--hemoprotein reductase] + O2 = (S)-nandinine + oxidized [NADPH--hemoprotein reductase] + 2 H2O + H(+)</text>
        <dbReference type="Rhea" id="RHEA:50364"/>
        <dbReference type="Rhea" id="RHEA-COMP:11964"/>
        <dbReference type="Rhea" id="RHEA-COMP:11965"/>
        <dbReference type="ChEBI" id="CHEBI:15377"/>
        <dbReference type="ChEBI" id="CHEBI:15378"/>
        <dbReference type="ChEBI" id="CHEBI:15379"/>
        <dbReference type="ChEBI" id="CHEBI:17129"/>
        <dbReference type="ChEBI" id="CHEBI:57618"/>
        <dbReference type="ChEBI" id="CHEBI:58210"/>
        <dbReference type="ChEBI" id="CHEBI:132749"/>
        <dbReference type="EC" id="1.14.19.73"/>
    </reaction>
</comment>
<comment type="cofactor">
    <cofactor evidence="1">
        <name>heme</name>
        <dbReference type="ChEBI" id="CHEBI:30413"/>
    </cofactor>
</comment>
<comment type="biophysicochemical properties">
    <kinetics>
        <text evidence="3">kcat is 13.8 min(-1) for (S)-cheilanthifoline.</text>
    </kinetics>
    <phDependence>
        <text evidence="3">Optimum pH is 8.0.</text>
    </phDependence>
    <temperatureDependence>
        <text evidence="3">Optimum temperature is between 30-35 degrees Celsius.</text>
    </temperatureDependence>
</comment>
<comment type="subcellular location">
    <subcellularLocation>
        <location evidence="5">Endoplasmic reticulum membrane</location>
        <topology evidence="5">Single-pass membrane protein</topology>
    </subcellularLocation>
</comment>
<comment type="tissue specificity">
    <text evidence="3">Expressed in roots and at lower levels in stems, leaves and plantlets.</text>
</comment>
<comment type="similarity">
    <text evidence="5">Belongs to the cytochrome P450 family.</text>
</comment>
<sequence>MEEKIMTNNSPWILTSSTTTTTTILLSLLFTIFIILRRNKSSSSKMVWPTGPKTLPIIGNMNILGGTALHVVLHNLAKTYGNVMTIWIGSWRPVIVVSDIDRAWEVLVNKSSDYSARDMPEITKLATADWKTISSSDSGPFWTNLRKGLQNVALSPQNLSSQSKFQERDIIKTIQNLKEEAKMNNGIVKPLDHLKKAMVRLISRLIYGQDFDNDEYVEEMHHTIEELIRVSGYARLAEAFYYAKYLPSHKKAVREVLQANQRVQNLVRPLLSLNSPTNTYLHFLRSQNYEDEVIIFAIFEAYLLGVDSTSSTTAWALAYLIREPNVQEKLYEELKNFTNDNDRKMVKFEDLNKLQYLQAVVKETMRMKPIAPLAIPHKACRETSLMGRKVNQGTRVMVNIYALHHNQNVWKEPYKFNPERFLQKNQDGVDGKAMEQSLLPFSAGMRICAGMELGKLQFSFALANLVNAFKWSCVSDGVFPDMSDQLGFVLLMKTPLEAGIVPRM</sequence>
<evidence type="ECO:0000250" key="1">
    <source>
        <dbReference type="UniProtKB" id="Q96242"/>
    </source>
</evidence>
<evidence type="ECO:0000255" key="2"/>
<evidence type="ECO:0000269" key="3">
    <source>
    </source>
</evidence>
<evidence type="ECO:0000303" key="4">
    <source>
    </source>
</evidence>
<evidence type="ECO:0000305" key="5"/>